<dbReference type="EMBL" id="CP000725">
    <property type="protein sequence ID" value="ABV09388.1"/>
    <property type="molecule type" value="Genomic_DNA"/>
</dbReference>
<dbReference type="RefSeq" id="WP_012000286.1">
    <property type="nucleotide sequence ID" value="NC_009785.1"/>
</dbReference>
<dbReference type="SMR" id="A8AWG9"/>
<dbReference type="STRING" id="467705.SGO_0830"/>
<dbReference type="KEGG" id="sgo:SGO_0830"/>
<dbReference type="eggNOG" id="COG0322">
    <property type="taxonomic scope" value="Bacteria"/>
</dbReference>
<dbReference type="HOGENOM" id="CLU_014841_3_2_9"/>
<dbReference type="Proteomes" id="UP000001131">
    <property type="component" value="Chromosome"/>
</dbReference>
<dbReference type="GO" id="GO:0005737">
    <property type="term" value="C:cytoplasm"/>
    <property type="evidence" value="ECO:0007669"/>
    <property type="project" value="UniProtKB-SubCell"/>
</dbReference>
<dbReference type="GO" id="GO:0009380">
    <property type="term" value="C:excinuclease repair complex"/>
    <property type="evidence" value="ECO:0007669"/>
    <property type="project" value="InterPro"/>
</dbReference>
<dbReference type="GO" id="GO:0003677">
    <property type="term" value="F:DNA binding"/>
    <property type="evidence" value="ECO:0007669"/>
    <property type="project" value="UniProtKB-UniRule"/>
</dbReference>
<dbReference type="GO" id="GO:0009381">
    <property type="term" value="F:excinuclease ABC activity"/>
    <property type="evidence" value="ECO:0007669"/>
    <property type="project" value="UniProtKB-UniRule"/>
</dbReference>
<dbReference type="GO" id="GO:0006289">
    <property type="term" value="P:nucleotide-excision repair"/>
    <property type="evidence" value="ECO:0007669"/>
    <property type="project" value="UniProtKB-UniRule"/>
</dbReference>
<dbReference type="GO" id="GO:0009432">
    <property type="term" value="P:SOS response"/>
    <property type="evidence" value="ECO:0007669"/>
    <property type="project" value="UniProtKB-UniRule"/>
</dbReference>
<dbReference type="CDD" id="cd10434">
    <property type="entry name" value="GIY-YIG_UvrC_Cho"/>
    <property type="match status" value="1"/>
</dbReference>
<dbReference type="FunFam" id="1.10.150.20:FF:000005">
    <property type="entry name" value="UvrABC system protein C"/>
    <property type="match status" value="1"/>
</dbReference>
<dbReference type="FunFam" id="3.30.420.340:FF:000002">
    <property type="entry name" value="UvrABC system protein C"/>
    <property type="match status" value="1"/>
</dbReference>
<dbReference type="FunFam" id="3.40.1440.10:FF:000001">
    <property type="entry name" value="UvrABC system protein C"/>
    <property type="match status" value="1"/>
</dbReference>
<dbReference type="FunFam" id="4.10.860.10:FF:000007">
    <property type="entry name" value="UvrABC system protein C"/>
    <property type="match status" value="1"/>
</dbReference>
<dbReference type="Gene3D" id="1.10.150.20">
    <property type="entry name" value="5' to 3' exonuclease, C-terminal subdomain"/>
    <property type="match status" value="1"/>
</dbReference>
<dbReference type="Gene3D" id="3.40.1440.10">
    <property type="entry name" value="GIY-YIG endonuclease"/>
    <property type="match status" value="1"/>
</dbReference>
<dbReference type="Gene3D" id="4.10.860.10">
    <property type="entry name" value="UVR domain"/>
    <property type="match status" value="1"/>
</dbReference>
<dbReference type="Gene3D" id="3.30.420.340">
    <property type="entry name" value="UvrC, RNAse H endonuclease domain"/>
    <property type="match status" value="1"/>
</dbReference>
<dbReference type="HAMAP" id="MF_00203">
    <property type="entry name" value="UvrC"/>
    <property type="match status" value="1"/>
</dbReference>
<dbReference type="InterPro" id="IPR000305">
    <property type="entry name" value="GIY-YIG_endonuc"/>
</dbReference>
<dbReference type="InterPro" id="IPR035901">
    <property type="entry name" value="GIY-YIG_endonuc_sf"/>
</dbReference>
<dbReference type="InterPro" id="IPR047296">
    <property type="entry name" value="GIY-YIG_UvrC_Cho"/>
</dbReference>
<dbReference type="InterPro" id="IPR010994">
    <property type="entry name" value="RuvA_2-like"/>
</dbReference>
<dbReference type="InterPro" id="IPR001943">
    <property type="entry name" value="UVR_dom"/>
</dbReference>
<dbReference type="InterPro" id="IPR036876">
    <property type="entry name" value="UVR_dom_sf"/>
</dbReference>
<dbReference type="InterPro" id="IPR050066">
    <property type="entry name" value="UvrABC_protein_C"/>
</dbReference>
<dbReference type="InterPro" id="IPR004791">
    <property type="entry name" value="UvrC"/>
</dbReference>
<dbReference type="InterPro" id="IPR001162">
    <property type="entry name" value="UvrC_RNase_H_dom"/>
</dbReference>
<dbReference type="InterPro" id="IPR038476">
    <property type="entry name" value="UvrC_RNase_H_dom_sf"/>
</dbReference>
<dbReference type="NCBIfam" id="TIGR00194">
    <property type="entry name" value="uvrC"/>
    <property type="match status" value="1"/>
</dbReference>
<dbReference type="PANTHER" id="PTHR30562:SF1">
    <property type="entry name" value="UVRABC SYSTEM PROTEIN C"/>
    <property type="match status" value="1"/>
</dbReference>
<dbReference type="PANTHER" id="PTHR30562">
    <property type="entry name" value="UVRC/OXIDOREDUCTASE"/>
    <property type="match status" value="1"/>
</dbReference>
<dbReference type="Pfam" id="PF01541">
    <property type="entry name" value="GIY-YIG"/>
    <property type="match status" value="1"/>
</dbReference>
<dbReference type="Pfam" id="PF14520">
    <property type="entry name" value="HHH_5"/>
    <property type="match status" value="1"/>
</dbReference>
<dbReference type="Pfam" id="PF02151">
    <property type="entry name" value="UVR"/>
    <property type="match status" value="1"/>
</dbReference>
<dbReference type="Pfam" id="PF22920">
    <property type="entry name" value="UvrC_RNaseH"/>
    <property type="match status" value="1"/>
</dbReference>
<dbReference type="Pfam" id="PF08459">
    <property type="entry name" value="UvrC_RNaseH_dom"/>
    <property type="match status" value="1"/>
</dbReference>
<dbReference type="SMART" id="SM00465">
    <property type="entry name" value="GIYc"/>
    <property type="match status" value="1"/>
</dbReference>
<dbReference type="SUPFAM" id="SSF46600">
    <property type="entry name" value="C-terminal UvrC-binding domain of UvrB"/>
    <property type="match status" value="1"/>
</dbReference>
<dbReference type="SUPFAM" id="SSF82771">
    <property type="entry name" value="GIY-YIG endonuclease"/>
    <property type="match status" value="1"/>
</dbReference>
<dbReference type="SUPFAM" id="SSF47781">
    <property type="entry name" value="RuvA domain 2-like"/>
    <property type="match status" value="1"/>
</dbReference>
<dbReference type="PROSITE" id="PS50164">
    <property type="entry name" value="GIY_YIG"/>
    <property type="match status" value="1"/>
</dbReference>
<dbReference type="PROSITE" id="PS50151">
    <property type="entry name" value="UVR"/>
    <property type="match status" value="1"/>
</dbReference>
<dbReference type="PROSITE" id="PS50165">
    <property type="entry name" value="UVRC"/>
    <property type="match status" value="1"/>
</dbReference>
<feature type="chain" id="PRO_1000077850" description="UvrABC system protein C">
    <location>
        <begin position="1"/>
        <end position="611"/>
    </location>
</feature>
<feature type="domain" description="GIY-YIG" evidence="1">
    <location>
        <begin position="14"/>
        <end position="91"/>
    </location>
</feature>
<feature type="domain" description="UVR" evidence="1">
    <location>
        <begin position="196"/>
        <end position="231"/>
    </location>
</feature>
<name>UVRC_STRGC</name>
<accession>A8AWG9</accession>
<sequence length="611" mass="70053">MNKLIQSKLELLPTSPGCYIHKDKNGTIIYVGKAKNLRNRVRSYFRGSHDTKTEALVSEIVDFEFIVTESNIEALLLEINLIKENKPKYNIMLKDDKSYPFIKITNETYPRLIITRQVKKDGGLYFGPYPDVGAANEIKRLLDRLFPFRKCTNPPEKVCFYYHLGQCKAHTICQVDSQYFKDLAQEVAAFLKGQDDQIIEDLRGKMAGAAQTMEFEKAAEYRDLIQSIGTLRTKQRVMAKDLQNRDVFGYYVDKGWMCVQVFFVRQGKLIERDVNLFPYYNDPDEDFLTYIGQFYQEKSHLKPNEILIPADIDEEAVRAMVDTKVLKPQRGEKKQLVNLAIKNARVSLQQKFDLLEKSIEKTQGAIENLGQLLNIPTPVRIESFDNSNIMGTSPVSAMVVFVNGKPSKKDYRKYKIKTVVGPDDYASMREVIKRRYSRVIRDGLTPPDLIVIDGGQGQVNVAKEVIQEQLGLDIPIAGLQKNDKHQTHELLFGDPLQVVELSRNSQEFFLLQRIQDEVHRFAITFHRQLRSKNSFSSQLDGIEGLGPKRKQNLMKHFKSLTKIKEASVDEIVEVGVPRAVAEAVQEKLNLKTQEQQQARLREVAEPQAEIE</sequence>
<evidence type="ECO:0000255" key="1">
    <source>
        <dbReference type="HAMAP-Rule" id="MF_00203"/>
    </source>
</evidence>
<comment type="function">
    <text evidence="1">The UvrABC repair system catalyzes the recognition and processing of DNA lesions. UvrC both incises the 5' and 3' sides of the lesion. The N-terminal half is responsible for the 3' incision and the C-terminal half is responsible for the 5' incision.</text>
</comment>
<comment type="subunit">
    <text evidence="1">Interacts with UvrB in an incision complex.</text>
</comment>
<comment type="subcellular location">
    <subcellularLocation>
        <location evidence="1">Cytoplasm</location>
    </subcellularLocation>
</comment>
<comment type="similarity">
    <text evidence="1">Belongs to the UvrC family.</text>
</comment>
<proteinExistence type="inferred from homology"/>
<keyword id="KW-0963">Cytoplasm</keyword>
<keyword id="KW-0227">DNA damage</keyword>
<keyword id="KW-0228">DNA excision</keyword>
<keyword id="KW-0234">DNA repair</keyword>
<keyword id="KW-0267">Excision nuclease</keyword>
<keyword id="KW-1185">Reference proteome</keyword>
<keyword id="KW-0742">SOS response</keyword>
<organism>
    <name type="scientific">Streptococcus gordonii (strain Challis / ATCC 35105 / BCRC 15272 / CH1 / DL1 / V288)</name>
    <dbReference type="NCBI Taxonomy" id="467705"/>
    <lineage>
        <taxon>Bacteria</taxon>
        <taxon>Bacillati</taxon>
        <taxon>Bacillota</taxon>
        <taxon>Bacilli</taxon>
        <taxon>Lactobacillales</taxon>
        <taxon>Streptococcaceae</taxon>
        <taxon>Streptococcus</taxon>
    </lineage>
</organism>
<reference key="1">
    <citation type="journal article" date="2007" name="J. Bacteriol.">
        <title>Genome-wide transcriptional changes in Streptococcus gordonii in response to competence signaling peptide.</title>
        <authorList>
            <person name="Vickerman M.M."/>
            <person name="Iobst S."/>
            <person name="Jesionowski A.M."/>
            <person name="Gill S.R."/>
        </authorList>
    </citation>
    <scope>NUCLEOTIDE SEQUENCE [LARGE SCALE GENOMIC DNA]</scope>
    <source>
        <strain>Challis / ATCC 35105 / BCRC 15272 / CH1 / DL1 / V288</strain>
    </source>
</reference>
<gene>
    <name evidence="1" type="primary">uvrC</name>
    <name type="ordered locus">SGO_0830</name>
</gene>
<protein>
    <recommendedName>
        <fullName evidence="1">UvrABC system protein C</fullName>
        <shortName evidence="1">Protein UvrC</shortName>
    </recommendedName>
    <alternativeName>
        <fullName evidence="1">Excinuclease ABC subunit C</fullName>
    </alternativeName>
</protein>